<keyword id="KW-0548">Nucleotidyltransferase</keyword>
<keyword id="KW-0694">RNA-binding</keyword>
<keyword id="KW-0698">rRNA processing</keyword>
<keyword id="KW-0808">Transferase</keyword>
<keyword id="KW-0819">tRNA processing</keyword>
<keyword id="KW-0820">tRNA-binding</keyword>
<comment type="function">
    <text evidence="1">Phosphorolytic 3'-5' exoribonuclease that plays an important role in tRNA 3'-end maturation. Removes nucleotide residues following the 3'-CCA terminus of tRNAs; can also add nucleotides to the ends of RNA molecules by using nucleoside diphosphates as substrates, but this may not be physiologically important. Probably plays a role in initiation of 16S rRNA degradation (leading to ribosome degradation) during starvation.</text>
</comment>
<comment type="catalytic activity">
    <reaction evidence="1">
        <text>tRNA(n+1) + phosphate = tRNA(n) + a ribonucleoside 5'-diphosphate</text>
        <dbReference type="Rhea" id="RHEA:10628"/>
        <dbReference type="Rhea" id="RHEA-COMP:17343"/>
        <dbReference type="Rhea" id="RHEA-COMP:17344"/>
        <dbReference type="ChEBI" id="CHEBI:43474"/>
        <dbReference type="ChEBI" id="CHEBI:57930"/>
        <dbReference type="ChEBI" id="CHEBI:173114"/>
        <dbReference type="EC" id="2.7.7.56"/>
    </reaction>
</comment>
<comment type="subunit">
    <text evidence="1">Homohexameric ring arranged as a trimer of dimers.</text>
</comment>
<comment type="similarity">
    <text evidence="1">Belongs to the RNase PH family.</text>
</comment>
<protein>
    <recommendedName>
        <fullName evidence="1">Ribonuclease PH</fullName>
        <shortName evidence="1">RNase PH</shortName>
        <ecNumber evidence="1">2.7.7.56</ecNumber>
    </recommendedName>
    <alternativeName>
        <fullName evidence="1">tRNA nucleotidyltransferase</fullName>
    </alternativeName>
</protein>
<feature type="chain" id="PRO_1000024828" description="Ribonuclease PH">
    <location>
        <begin position="1"/>
        <end position="259"/>
    </location>
</feature>
<feature type="binding site" evidence="1">
    <location>
        <position position="88"/>
    </location>
    <ligand>
        <name>phosphate</name>
        <dbReference type="ChEBI" id="CHEBI:43474"/>
        <note>substrate</note>
    </ligand>
</feature>
<feature type="binding site" evidence="1">
    <location>
        <begin position="126"/>
        <end position="128"/>
    </location>
    <ligand>
        <name>phosphate</name>
        <dbReference type="ChEBI" id="CHEBI:43474"/>
        <note>substrate</note>
    </ligand>
</feature>
<organism>
    <name type="scientific">Mycobacterium avium (strain 104)</name>
    <dbReference type="NCBI Taxonomy" id="243243"/>
    <lineage>
        <taxon>Bacteria</taxon>
        <taxon>Bacillati</taxon>
        <taxon>Actinomycetota</taxon>
        <taxon>Actinomycetes</taxon>
        <taxon>Mycobacteriales</taxon>
        <taxon>Mycobacteriaceae</taxon>
        <taxon>Mycobacterium</taxon>
        <taxon>Mycobacterium avium complex (MAC)</taxon>
    </lineage>
</organism>
<reference key="1">
    <citation type="submission" date="2006-10" db="EMBL/GenBank/DDBJ databases">
        <authorList>
            <person name="Fleischmann R.D."/>
            <person name="Dodson R.J."/>
            <person name="Haft D.H."/>
            <person name="Merkel J.S."/>
            <person name="Nelson W.C."/>
            <person name="Fraser C.M."/>
        </authorList>
    </citation>
    <scope>NUCLEOTIDE SEQUENCE [LARGE SCALE GENOMIC DNA]</scope>
    <source>
        <strain>104</strain>
    </source>
</reference>
<dbReference type="EC" id="2.7.7.56" evidence="1"/>
<dbReference type="EMBL" id="CP000479">
    <property type="protein sequence ID" value="ABK65031.1"/>
    <property type="molecule type" value="Genomic_DNA"/>
</dbReference>
<dbReference type="RefSeq" id="WP_011724220.1">
    <property type="nucleotide sequence ID" value="NC_008595.1"/>
</dbReference>
<dbReference type="SMR" id="A0QD04"/>
<dbReference type="KEGG" id="mav:MAV_1557"/>
<dbReference type="HOGENOM" id="CLU_050858_0_0_11"/>
<dbReference type="Proteomes" id="UP000001574">
    <property type="component" value="Chromosome"/>
</dbReference>
<dbReference type="GO" id="GO:0000175">
    <property type="term" value="F:3'-5'-RNA exonuclease activity"/>
    <property type="evidence" value="ECO:0007669"/>
    <property type="project" value="UniProtKB-UniRule"/>
</dbReference>
<dbReference type="GO" id="GO:0000049">
    <property type="term" value="F:tRNA binding"/>
    <property type="evidence" value="ECO:0007669"/>
    <property type="project" value="UniProtKB-UniRule"/>
</dbReference>
<dbReference type="GO" id="GO:0009022">
    <property type="term" value="F:tRNA nucleotidyltransferase activity"/>
    <property type="evidence" value="ECO:0007669"/>
    <property type="project" value="UniProtKB-UniRule"/>
</dbReference>
<dbReference type="GO" id="GO:0016075">
    <property type="term" value="P:rRNA catabolic process"/>
    <property type="evidence" value="ECO:0007669"/>
    <property type="project" value="UniProtKB-UniRule"/>
</dbReference>
<dbReference type="GO" id="GO:0006364">
    <property type="term" value="P:rRNA processing"/>
    <property type="evidence" value="ECO:0007669"/>
    <property type="project" value="UniProtKB-KW"/>
</dbReference>
<dbReference type="GO" id="GO:0008033">
    <property type="term" value="P:tRNA processing"/>
    <property type="evidence" value="ECO:0007669"/>
    <property type="project" value="UniProtKB-UniRule"/>
</dbReference>
<dbReference type="CDD" id="cd11362">
    <property type="entry name" value="RNase_PH_bact"/>
    <property type="match status" value="1"/>
</dbReference>
<dbReference type="FunFam" id="3.30.230.70:FF:000003">
    <property type="entry name" value="Ribonuclease PH"/>
    <property type="match status" value="1"/>
</dbReference>
<dbReference type="Gene3D" id="3.30.230.70">
    <property type="entry name" value="GHMP Kinase, N-terminal domain"/>
    <property type="match status" value="1"/>
</dbReference>
<dbReference type="HAMAP" id="MF_00564">
    <property type="entry name" value="RNase_PH"/>
    <property type="match status" value="1"/>
</dbReference>
<dbReference type="InterPro" id="IPR001247">
    <property type="entry name" value="ExoRNase_PH_dom1"/>
</dbReference>
<dbReference type="InterPro" id="IPR015847">
    <property type="entry name" value="ExoRNase_PH_dom2"/>
</dbReference>
<dbReference type="InterPro" id="IPR036345">
    <property type="entry name" value="ExoRNase_PH_dom2_sf"/>
</dbReference>
<dbReference type="InterPro" id="IPR027408">
    <property type="entry name" value="PNPase/RNase_PH_dom_sf"/>
</dbReference>
<dbReference type="InterPro" id="IPR020568">
    <property type="entry name" value="Ribosomal_Su5_D2-typ_SF"/>
</dbReference>
<dbReference type="InterPro" id="IPR050080">
    <property type="entry name" value="RNase_PH"/>
</dbReference>
<dbReference type="InterPro" id="IPR002381">
    <property type="entry name" value="RNase_PH_bac-type"/>
</dbReference>
<dbReference type="InterPro" id="IPR018336">
    <property type="entry name" value="RNase_PH_CS"/>
</dbReference>
<dbReference type="NCBIfam" id="TIGR01966">
    <property type="entry name" value="RNasePH"/>
    <property type="match status" value="1"/>
</dbReference>
<dbReference type="PANTHER" id="PTHR11953">
    <property type="entry name" value="EXOSOME COMPLEX COMPONENT"/>
    <property type="match status" value="1"/>
</dbReference>
<dbReference type="PANTHER" id="PTHR11953:SF0">
    <property type="entry name" value="EXOSOME COMPLEX COMPONENT RRP41"/>
    <property type="match status" value="1"/>
</dbReference>
<dbReference type="Pfam" id="PF01138">
    <property type="entry name" value="RNase_PH"/>
    <property type="match status" value="1"/>
</dbReference>
<dbReference type="Pfam" id="PF03725">
    <property type="entry name" value="RNase_PH_C"/>
    <property type="match status" value="1"/>
</dbReference>
<dbReference type="SUPFAM" id="SSF55666">
    <property type="entry name" value="Ribonuclease PH domain 2-like"/>
    <property type="match status" value="1"/>
</dbReference>
<dbReference type="SUPFAM" id="SSF54211">
    <property type="entry name" value="Ribosomal protein S5 domain 2-like"/>
    <property type="match status" value="1"/>
</dbReference>
<dbReference type="PROSITE" id="PS01277">
    <property type="entry name" value="RIBONUCLEASE_PH"/>
    <property type="match status" value="1"/>
</dbReference>
<gene>
    <name evidence="1" type="primary">rph</name>
    <name type="ordered locus">MAV_1557</name>
</gene>
<accession>A0QD04</accession>
<sequence>MTRREDGRLDDELRPLVITRGFTEHPAGSVLIEFGHTKVMCTASVTEGVPRWRKGSGLGWLTAEYAMLPSATHTRSDRESVKGRLSGRTQEISRLIGRSLRACIDLAALGENTIAVDCDVLQADGGTRTAAITGAFVALADAVTYLSAAGKLSDPRPLSCAIAAVSVGVVDGRIRVDLPYEEDARAEVDMNVVATDTGTLVEVQGTGEGATFPRSTLDKLLDAALAACDKLFAAQREALKLPYPGVLPEGPPPPKVFGS</sequence>
<proteinExistence type="inferred from homology"/>
<evidence type="ECO:0000255" key="1">
    <source>
        <dbReference type="HAMAP-Rule" id="MF_00564"/>
    </source>
</evidence>
<name>RNPH_MYCA1</name>